<comment type="function">
    <text evidence="2">Forms part of the ribosomal stalk which helps the ribosome interact with GTP-bound translation factors.</text>
</comment>
<comment type="subunit">
    <text evidence="2">Part of the ribosomal stalk of the 50S ribosomal subunit. Interacts with L10 and the large rRNA to form the base of the stalk. L10 forms an elongated spine to which L12 dimers bind in a sequential fashion forming a multimeric L10(L12)X complex.</text>
</comment>
<comment type="PTM">
    <text evidence="2">One or more lysine residues are methylated.</text>
</comment>
<comment type="similarity">
    <text evidence="2">Belongs to the universal ribosomal protein uL11 family.</text>
</comment>
<reference key="1">
    <citation type="journal article" date="1995" name="Science">
        <title>Whole-genome random sequencing and assembly of Haemophilus influenzae Rd.</title>
        <authorList>
            <person name="Fleischmann R.D."/>
            <person name="Adams M.D."/>
            <person name="White O."/>
            <person name="Clayton R.A."/>
            <person name="Kirkness E.F."/>
            <person name="Kerlavage A.R."/>
            <person name="Bult C.J."/>
            <person name="Tomb J.-F."/>
            <person name="Dougherty B.A."/>
            <person name="Merrick J.M."/>
            <person name="McKenney K."/>
            <person name="Sutton G.G."/>
            <person name="FitzHugh W."/>
            <person name="Fields C.A."/>
            <person name="Gocayne J.D."/>
            <person name="Scott J.D."/>
            <person name="Shirley R."/>
            <person name="Liu L.-I."/>
            <person name="Glodek A."/>
            <person name="Kelley J.M."/>
            <person name="Weidman J.F."/>
            <person name="Phillips C.A."/>
            <person name="Spriggs T."/>
            <person name="Hedblom E."/>
            <person name="Cotton M.D."/>
            <person name="Utterback T.R."/>
            <person name="Hanna M.C."/>
            <person name="Nguyen D.T."/>
            <person name="Saudek D.M."/>
            <person name="Brandon R.C."/>
            <person name="Fine L.D."/>
            <person name="Fritchman J.L."/>
            <person name="Fuhrmann J.L."/>
            <person name="Geoghagen N.S.M."/>
            <person name="Gnehm C.L."/>
            <person name="McDonald L.A."/>
            <person name="Small K.V."/>
            <person name="Fraser C.M."/>
            <person name="Smith H.O."/>
            <person name="Venter J.C."/>
        </authorList>
    </citation>
    <scope>NUCLEOTIDE SEQUENCE [LARGE SCALE GENOMIC DNA]</scope>
    <source>
        <strain>ATCC 51907 / DSM 11121 / KW20 / Rd</strain>
    </source>
</reference>
<feature type="initiator methionine" description="Removed" evidence="1">
    <location>
        <position position="1"/>
    </location>
</feature>
<feature type="chain" id="PRO_0000104294" description="Large ribosomal subunit protein uL11">
    <location>
        <begin position="2"/>
        <end position="142"/>
    </location>
</feature>
<dbReference type="EMBL" id="L42023">
    <property type="protein sequence ID" value="AAC22175.1"/>
    <property type="molecule type" value="Genomic_DNA"/>
</dbReference>
<dbReference type="PIR" id="A64074">
    <property type="entry name" value="A64074"/>
</dbReference>
<dbReference type="RefSeq" id="NP_438675.1">
    <property type="nucleotide sequence ID" value="NC_000907.1"/>
</dbReference>
<dbReference type="SMR" id="P44351"/>
<dbReference type="STRING" id="71421.HI_0517"/>
<dbReference type="EnsemblBacteria" id="AAC22175">
    <property type="protein sequence ID" value="AAC22175"/>
    <property type="gene ID" value="HI_0517"/>
</dbReference>
<dbReference type="KEGG" id="hin:HI_0517"/>
<dbReference type="PATRIC" id="fig|71421.8.peg.536"/>
<dbReference type="eggNOG" id="COG0080">
    <property type="taxonomic scope" value="Bacteria"/>
</dbReference>
<dbReference type="HOGENOM" id="CLU_074237_2_0_6"/>
<dbReference type="OrthoDB" id="9802408at2"/>
<dbReference type="PhylomeDB" id="P44351"/>
<dbReference type="BioCyc" id="HINF71421:G1GJ1-530-MONOMER"/>
<dbReference type="Proteomes" id="UP000000579">
    <property type="component" value="Chromosome"/>
</dbReference>
<dbReference type="GO" id="GO:0022625">
    <property type="term" value="C:cytosolic large ribosomal subunit"/>
    <property type="evidence" value="ECO:0000318"/>
    <property type="project" value="GO_Central"/>
</dbReference>
<dbReference type="GO" id="GO:0070180">
    <property type="term" value="F:large ribosomal subunit rRNA binding"/>
    <property type="evidence" value="ECO:0000318"/>
    <property type="project" value="GO_Central"/>
</dbReference>
<dbReference type="GO" id="GO:0003735">
    <property type="term" value="F:structural constituent of ribosome"/>
    <property type="evidence" value="ECO:0000318"/>
    <property type="project" value="GO_Central"/>
</dbReference>
<dbReference type="GO" id="GO:0006412">
    <property type="term" value="P:translation"/>
    <property type="evidence" value="ECO:0000318"/>
    <property type="project" value="GO_Central"/>
</dbReference>
<dbReference type="CDD" id="cd00349">
    <property type="entry name" value="Ribosomal_L11"/>
    <property type="match status" value="1"/>
</dbReference>
<dbReference type="FunFam" id="1.10.10.250:FF:000001">
    <property type="entry name" value="50S ribosomal protein L11"/>
    <property type="match status" value="1"/>
</dbReference>
<dbReference type="FunFam" id="3.30.1550.10:FF:000001">
    <property type="entry name" value="50S ribosomal protein L11"/>
    <property type="match status" value="1"/>
</dbReference>
<dbReference type="Gene3D" id="1.10.10.250">
    <property type="entry name" value="Ribosomal protein L11, C-terminal domain"/>
    <property type="match status" value="1"/>
</dbReference>
<dbReference type="Gene3D" id="3.30.1550.10">
    <property type="entry name" value="Ribosomal protein L11/L12, N-terminal domain"/>
    <property type="match status" value="1"/>
</dbReference>
<dbReference type="HAMAP" id="MF_00736">
    <property type="entry name" value="Ribosomal_uL11"/>
    <property type="match status" value="1"/>
</dbReference>
<dbReference type="InterPro" id="IPR000911">
    <property type="entry name" value="Ribosomal_uL11"/>
</dbReference>
<dbReference type="InterPro" id="IPR006519">
    <property type="entry name" value="Ribosomal_uL11_bac-typ"/>
</dbReference>
<dbReference type="InterPro" id="IPR020783">
    <property type="entry name" value="Ribosomal_uL11_C"/>
</dbReference>
<dbReference type="InterPro" id="IPR036769">
    <property type="entry name" value="Ribosomal_uL11_C_sf"/>
</dbReference>
<dbReference type="InterPro" id="IPR020784">
    <property type="entry name" value="Ribosomal_uL11_N"/>
</dbReference>
<dbReference type="InterPro" id="IPR036796">
    <property type="entry name" value="Ribosomal_uL11_N_sf"/>
</dbReference>
<dbReference type="NCBIfam" id="TIGR01632">
    <property type="entry name" value="L11_bact"/>
    <property type="match status" value="1"/>
</dbReference>
<dbReference type="PANTHER" id="PTHR11661">
    <property type="entry name" value="60S RIBOSOMAL PROTEIN L12"/>
    <property type="match status" value="1"/>
</dbReference>
<dbReference type="PANTHER" id="PTHR11661:SF1">
    <property type="entry name" value="LARGE RIBOSOMAL SUBUNIT PROTEIN UL11M"/>
    <property type="match status" value="1"/>
</dbReference>
<dbReference type="Pfam" id="PF00298">
    <property type="entry name" value="Ribosomal_L11"/>
    <property type="match status" value="1"/>
</dbReference>
<dbReference type="Pfam" id="PF03946">
    <property type="entry name" value="Ribosomal_L11_N"/>
    <property type="match status" value="1"/>
</dbReference>
<dbReference type="SMART" id="SM00649">
    <property type="entry name" value="RL11"/>
    <property type="match status" value="1"/>
</dbReference>
<dbReference type="SUPFAM" id="SSF54747">
    <property type="entry name" value="Ribosomal L11/L12e N-terminal domain"/>
    <property type="match status" value="1"/>
</dbReference>
<dbReference type="SUPFAM" id="SSF46906">
    <property type="entry name" value="Ribosomal protein L11, C-terminal domain"/>
    <property type="match status" value="1"/>
</dbReference>
<dbReference type="PROSITE" id="PS00359">
    <property type="entry name" value="RIBOSOMAL_L11"/>
    <property type="match status" value="1"/>
</dbReference>
<sequence length="142" mass="14904">MAKKVQAYVKLQVAAGMANPSPPVGPALGQQGVNIMEFCKAFNARTESLEKGLPIPVVITVYADRSFTFVTKTPPAAVLLKKAAGIKSGSGKPNKDKVGKVTLDQVRQIAETKAADMTGATIETKMKSIAGTARSMGLVVEE</sequence>
<name>RL11_HAEIN</name>
<accession>P44351</accession>
<evidence type="ECO:0000250" key="1"/>
<evidence type="ECO:0000255" key="2">
    <source>
        <dbReference type="HAMAP-Rule" id="MF_00736"/>
    </source>
</evidence>
<evidence type="ECO:0000305" key="3"/>
<organism>
    <name type="scientific">Haemophilus influenzae (strain ATCC 51907 / DSM 11121 / KW20 / Rd)</name>
    <dbReference type="NCBI Taxonomy" id="71421"/>
    <lineage>
        <taxon>Bacteria</taxon>
        <taxon>Pseudomonadati</taxon>
        <taxon>Pseudomonadota</taxon>
        <taxon>Gammaproteobacteria</taxon>
        <taxon>Pasteurellales</taxon>
        <taxon>Pasteurellaceae</taxon>
        <taxon>Haemophilus</taxon>
    </lineage>
</organism>
<gene>
    <name evidence="2" type="primary">rplK</name>
    <name evidence="2" type="synonym">rpl11</name>
    <name type="ordered locus">HI_0517</name>
</gene>
<protein>
    <recommendedName>
        <fullName evidence="2">Large ribosomal subunit protein uL11</fullName>
    </recommendedName>
    <alternativeName>
        <fullName evidence="3">50S ribosomal protein L11</fullName>
    </alternativeName>
</protein>
<keyword id="KW-0488">Methylation</keyword>
<keyword id="KW-1185">Reference proteome</keyword>
<keyword id="KW-0687">Ribonucleoprotein</keyword>
<keyword id="KW-0689">Ribosomal protein</keyword>
<keyword id="KW-0694">RNA-binding</keyword>
<keyword id="KW-0699">rRNA-binding</keyword>
<proteinExistence type="inferred from homology"/>